<name>GLGA_ALIFM</name>
<reference key="1">
    <citation type="submission" date="2008-08" db="EMBL/GenBank/DDBJ databases">
        <title>Complete sequence of Vibrio fischeri strain MJ11.</title>
        <authorList>
            <person name="Mandel M.J."/>
            <person name="Stabb E.V."/>
            <person name="Ruby E.G."/>
            <person name="Ferriera S."/>
            <person name="Johnson J."/>
            <person name="Kravitz S."/>
            <person name="Beeson K."/>
            <person name="Sutton G."/>
            <person name="Rogers Y.-H."/>
            <person name="Friedman R."/>
            <person name="Frazier M."/>
            <person name="Venter J.C."/>
        </authorList>
    </citation>
    <scope>NUCLEOTIDE SEQUENCE [LARGE SCALE GENOMIC DNA]</scope>
    <source>
        <strain>MJ11</strain>
    </source>
</reference>
<keyword id="KW-0320">Glycogen biosynthesis</keyword>
<keyword id="KW-0328">Glycosyltransferase</keyword>
<keyword id="KW-0808">Transferase</keyword>
<dbReference type="EC" id="2.4.1.21" evidence="1"/>
<dbReference type="EMBL" id="CP001133">
    <property type="protein sequence ID" value="ACH64090.1"/>
    <property type="molecule type" value="Genomic_DNA"/>
</dbReference>
<dbReference type="RefSeq" id="WP_012535224.1">
    <property type="nucleotide sequence ID" value="NC_011186.1"/>
</dbReference>
<dbReference type="SMR" id="B5EUW2"/>
<dbReference type="KEGG" id="vfm:VFMJ11_A0932"/>
<dbReference type="HOGENOM" id="CLU_009583_18_2_6"/>
<dbReference type="UniPathway" id="UPA00164"/>
<dbReference type="Proteomes" id="UP000001857">
    <property type="component" value="Chromosome II"/>
</dbReference>
<dbReference type="GO" id="GO:0005829">
    <property type="term" value="C:cytosol"/>
    <property type="evidence" value="ECO:0007669"/>
    <property type="project" value="TreeGrafter"/>
</dbReference>
<dbReference type="GO" id="GO:0009011">
    <property type="term" value="F:alpha-1,4-glucan glucosyltransferase (ADP-glucose donor) activity"/>
    <property type="evidence" value="ECO:0007669"/>
    <property type="project" value="UniProtKB-UniRule"/>
</dbReference>
<dbReference type="GO" id="GO:0004373">
    <property type="term" value="F:alpha-1,4-glucan glucosyltransferase (UDP-glucose donor) activity"/>
    <property type="evidence" value="ECO:0007669"/>
    <property type="project" value="InterPro"/>
</dbReference>
<dbReference type="GO" id="GO:0005978">
    <property type="term" value="P:glycogen biosynthetic process"/>
    <property type="evidence" value="ECO:0007669"/>
    <property type="project" value="UniProtKB-UniRule"/>
</dbReference>
<dbReference type="CDD" id="cd03791">
    <property type="entry name" value="GT5_Glycogen_synthase_DULL1-like"/>
    <property type="match status" value="1"/>
</dbReference>
<dbReference type="Gene3D" id="3.40.50.2000">
    <property type="entry name" value="Glycogen Phosphorylase B"/>
    <property type="match status" value="2"/>
</dbReference>
<dbReference type="HAMAP" id="MF_00484">
    <property type="entry name" value="Glycogen_synth"/>
    <property type="match status" value="1"/>
</dbReference>
<dbReference type="InterPro" id="IPR001296">
    <property type="entry name" value="Glyco_trans_1"/>
</dbReference>
<dbReference type="InterPro" id="IPR011835">
    <property type="entry name" value="GS/SS"/>
</dbReference>
<dbReference type="InterPro" id="IPR013534">
    <property type="entry name" value="Starch_synth_cat_dom"/>
</dbReference>
<dbReference type="NCBIfam" id="TIGR02095">
    <property type="entry name" value="glgA"/>
    <property type="match status" value="1"/>
</dbReference>
<dbReference type="NCBIfam" id="NF001903">
    <property type="entry name" value="PRK00654.2-2"/>
    <property type="match status" value="1"/>
</dbReference>
<dbReference type="NCBIfam" id="NF001906">
    <property type="entry name" value="PRK00654.2-5"/>
    <property type="match status" value="1"/>
</dbReference>
<dbReference type="PANTHER" id="PTHR45825:SF11">
    <property type="entry name" value="ALPHA AMYLASE DOMAIN-CONTAINING PROTEIN"/>
    <property type="match status" value="1"/>
</dbReference>
<dbReference type="PANTHER" id="PTHR45825">
    <property type="entry name" value="GRANULE-BOUND STARCH SYNTHASE 1, CHLOROPLASTIC/AMYLOPLASTIC"/>
    <property type="match status" value="1"/>
</dbReference>
<dbReference type="Pfam" id="PF08323">
    <property type="entry name" value="Glyco_transf_5"/>
    <property type="match status" value="1"/>
</dbReference>
<dbReference type="Pfam" id="PF00534">
    <property type="entry name" value="Glycos_transf_1"/>
    <property type="match status" value="1"/>
</dbReference>
<dbReference type="SUPFAM" id="SSF53756">
    <property type="entry name" value="UDP-Glycosyltransferase/glycogen phosphorylase"/>
    <property type="match status" value="1"/>
</dbReference>
<organism>
    <name type="scientific">Aliivibrio fischeri (strain MJ11)</name>
    <name type="common">Vibrio fischeri</name>
    <dbReference type="NCBI Taxonomy" id="388396"/>
    <lineage>
        <taxon>Bacteria</taxon>
        <taxon>Pseudomonadati</taxon>
        <taxon>Pseudomonadota</taxon>
        <taxon>Gammaproteobacteria</taxon>
        <taxon>Vibrionales</taxon>
        <taxon>Vibrionaceae</taxon>
        <taxon>Aliivibrio</taxon>
    </lineage>
</organism>
<sequence length="487" mass="54865">MVTKTLSIVFVASEVDGLIKSGGLADVAKALPKSLKELGHSVQIVMPAYKTIAGRDDAEIILTTQLEHWPHTAYQVRSLSIDGISVFAIESGDYFERAEMYAENNQAYADNGERFAFFSAATLDLLPKLLNKKPDIIHVNDWHTGLIPYLLKKRYAENEFYHQTRSVLSIHNAVFKGIFHYDEIACLSEFKSHFVPEASISHTHVSMLKAGVQCADKINAVSPNYAKELLTELGSHGMASDFQDRESDLIGILNGCDYSEWNPEKDSYIPKQFKVNRISMVRGKKACKAALQQEVSLPQKDVAMYGMVCRLTNQKGIQYLLPILEQFLKNDLQLVIVGTGDPVLAARLTEIAQEHSDKFAFIEAYDNKLAHWVEAGSDFFIMPSEFEPCGLNQIYSMAYGTLPIVREVGGLKDSVNNYDDDIENATGFSFKNPEPMELLLVLMRSLLLYSQNLNEVKRVQLHAMKQDFCWNKAALKYIEMYRTTINS</sequence>
<comment type="function">
    <text evidence="1">Synthesizes alpha-1,4-glucan chains using ADP-glucose.</text>
</comment>
<comment type="catalytic activity">
    <reaction evidence="1">
        <text>[(1-&gt;4)-alpha-D-glucosyl](n) + ADP-alpha-D-glucose = [(1-&gt;4)-alpha-D-glucosyl](n+1) + ADP + H(+)</text>
        <dbReference type="Rhea" id="RHEA:18189"/>
        <dbReference type="Rhea" id="RHEA-COMP:9584"/>
        <dbReference type="Rhea" id="RHEA-COMP:9587"/>
        <dbReference type="ChEBI" id="CHEBI:15378"/>
        <dbReference type="ChEBI" id="CHEBI:15444"/>
        <dbReference type="ChEBI" id="CHEBI:57498"/>
        <dbReference type="ChEBI" id="CHEBI:456216"/>
        <dbReference type="EC" id="2.4.1.21"/>
    </reaction>
</comment>
<comment type="pathway">
    <text evidence="1">Glycan biosynthesis; glycogen biosynthesis.</text>
</comment>
<comment type="similarity">
    <text evidence="1">Belongs to the glycosyltransferase 1 family. Bacterial/plant glycogen synthase subfamily.</text>
</comment>
<gene>
    <name evidence="1" type="primary">glgA</name>
    <name type="ordered locus">VFMJ11_A0932</name>
</gene>
<evidence type="ECO:0000255" key="1">
    <source>
        <dbReference type="HAMAP-Rule" id="MF_00484"/>
    </source>
</evidence>
<proteinExistence type="inferred from homology"/>
<accession>B5EUW2</accession>
<feature type="chain" id="PRO_1000126111" description="Glycogen synthase">
    <location>
        <begin position="1"/>
        <end position="487"/>
    </location>
</feature>
<feature type="binding site" evidence="1">
    <location>
        <position position="20"/>
    </location>
    <ligand>
        <name>ADP-alpha-D-glucose</name>
        <dbReference type="ChEBI" id="CHEBI:57498"/>
    </ligand>
</feature>
<protein>
    <recommendedName>
        <fullName evidence="1">Glycogen synthase</fullName>
        <ecNumber evidence="1">2.4.1.21</ecNumber>
    </recommendedName>
    <alternativeName>
        <fullName evidence="1">Starch [bacterial glycogen] synthase</fullName>
    </alternativeName>
</protein>